<accession>Q4K597</accession>
<name>NUSB_PSEF5</name>
<feature type="chain" id="PRO_0000265563" description="Transcription antitermination protein NusB">
    <location>
        <begin position="1"/>
        <end position="166"/>
    </location>
</feature>
<feature type="region of interest" description="Disordered" evidence="2">
    <location>
        <begin position="1"/>
        <end position="30"/>
    </location>
</feature>
<feature type="compositionally biased region" description="Basic and acidic residues" evidence="2">
    <location>
        <begin position="1"/>
        <end position="15"/>
    </location>
</feature>
<dbReference type="EMBL" id="CP000076">
    <property type="protein sequence ID" value="AAY94724.1"/>
    <property type="molecule type" value="Genomic_DNA"/>
</dbReference>
<dbReference type="RefSeq" id="WP_011063734.1">
    <property type="nucleotide sequence ID" value="NC_004129.6"/>
</dbReference>
<dbReference type="SMR" id="Q4K597"/>
<dbReference type="STRING" id="220664.PFL_5518"/>
<dbReference type="GeneID" id="57478466"/>
<dbReference type="KEGG" id="pfl:PFL_5518"/>
<dbReference type="PATRIC" id="fig|220664.5.peg.5633"/>
<dbReference type="eggNOG" id="COG0781">
    <property type="taxonomic scope" value="Bacteria"/>
</dbReference>
<dbReference type="HOGENOM" id="CLU_087843_4_1_6"/>
<dbReference type="Proteomes" id="UP000008540">
    <property type="component" value="Chromosome"/>
</dbReference>
<dbReference type="GO" id="GO:0005829">
    <property type="term" value="C:cytosol"/>
    <property type="evidence" value="ECO:0007669"/>
    <property type="project" value="TreeGrafter"/>
</dbReference>
<dbReference type="GO" id="GO:0003723">
    <property type="term" value="F:RNA binding"/>
    <property type="evidence" value="ECO:0007669"/>
    <property type="project" value="UniProtKB-UniRule"/>
</dbReference>
<dbReference type="GO" id="GO:0006353">
    <property type="term" value="P:DNA-templated transcription termination"/>
    <property type="evidence" value="ECO:0007669"/>
    <property type="project" value="UniProtKB-UniRule"/>
</dbReference>
<dbReference type="GO" id="GO:0031564">
    <property type="term" value="P:transcription antitermination"/>
    <property type="evidence" value="ECO:0007669"/>
    <property type="project" value="UniProtKB-KW"/>
</dbReference>
<dbReference type="FunFam" id="1.10.940.10:FF:000001">
    <property type="entry name" value="Transcription antitermination factor NusB"/>
    <property type="match status" value="1"/>
</dbReference>
<dbReference type="Gene3D" id="1.10.940.10">
    <property type="entry name" value="NusB-like"/>
    <property type="match status" value="1"/>
</dbReference>
<dbReference type="HAMAP" id="MF_00073">
    <property type="entry name" value="NusB"/>
    <property type="match status" value="1"/>
</dbReference>
<dbReference type="InterPro" id="IPR035926">
    <property type="entry name" value="NusB-like_sf"/>
</dbReference>
<dbReference type="InterPro" id="IPR011605">
    <property type="entry name" value="NusB_fam"/>
</dbReference>
<dbReference type="InterPro" id="IPR006027">
    <property type="entry name" value="NusB_RsmB_TIM44"/>
</dbReference>
<dbReference type="NCBIfam" id="TIGR01951">
    <property type="entry name" value="nusB"/>
    <property type="match status" value="1"/>
</dbReference>
<dbReference type="PANTHER" id="PTHR11078:SF3">
    <property type="entry name" value="ANTITERMINATION NUSB DOMAIN-CONTAINING PROTEIN"/>
    <property type="match status" value="1"/>
</dbReference>
<dbReference type="PANTHER" id="PTHR11078">
    <property type="entry name" value="N UTILIZATION SUBSTANCE PROTEIN B-RELATED"/>
    <property type="match status" value="1"/>
</dbReference>
<dbReference type="Pfam" id="PF01029">
    <property type="entry name" value="NusB"/>
    <property type="match status" value="1"/>
</dbReference>
<dbReference type="SUPFAM" id="SSF48013">
    <property type="entry name" value="NusB-like"/>
    <property type="match status" value="1"/>
</dbReference>
<keyword id="KW-0694">RNA-binding</keyword>
<keyword id="KW-0804">Transcription</keyword>
<keyword id="KW-0889">Transcription antitermination</keyword>
<keyword id="KW-0805">Transcription regulation</keyword>
<sequence>MISDDSDRFNPRDPKPANAGKPSKSAKRREARQLATQALYQWHMAKHSLNEIEAQFRVDNDFTDIDGAYFREILHGVPANKNEIDTALVPCLDLAIDELDPVELAVLRLSTWELLKRVDVPYRVVINEGIELAKVFGSTDGHKFVNGVLDKLAPRLREAEVKAFKR</sequence>
<reference key="1">
    <citation type="journal article" date="2005" name="Nat. Biotechnol.">
        <title>Complete genome sequence of the plant commensal Pseudomonas fluorescens Pf-5.</title>
        <authorList>
            <person name="Paulsen I.T."/>
            <person name="Press C.M."/>
            <person name="Ravel J."/>
            <person name="Kobayashi D.Y."/>
            <person name="Myers G.S.A."/>
            <person name="Mavrodi D.V."/>
            <person name="DeBoy R.T."/>
            <person name="Seshadri R."/>
            <person name="Ren Q."/>
            <person name="Madupu R."/>
            <person name="Dodson R.J."/>
            <person name="Durkin A.S."/>
            <person name="Brinkac L.M."/>
            <person name="Daugherty S.C."/>
            <person name="Sullivan S.A."/>
            <person name="Rosovitz M.J."/>
            <person name="Gwinn M.L."/>
            <person name="Zhou L."/>
            <person name="Schneider D.J."/>
            <person name="Cartinhour S.W."/>
            <person name="Nelson W.C."/>
            <person name="Weidman J."/>
            <person name="Watkins K."/>
            <person name="Tran K."/>
            <person name="Khouri H."/>
            <person name="Pierson E.A."/>
            <person name="Pierson L.S. III"/>
            <person name="Thomashow L.S."/>
            <person name="Loper J.E."/>
        </authorList>
    </citation>
    <scope>NUCLEOTIDE SEQUENCE [LARGE SCALE GENOMIC DNA]</scope>
    <source>
        <strain>ATCC BAA-477 / NRRL B-23932 / Pf-5</strain>
    </source>
</reference>
<proteinExistence type="inferred from homology"/>
<protein>
    <recommendedName>
        <fullName evidence="1">Transcription antitermination protein NusB</fullName>
    </recommendedName>
    <alternativeName>
        <fullName evidence="1">Antitermination factor NusB</fullName>
    </alternativeName>
</protein>
<organism>
    <name type="scientific">Pseudomonas fluorescens (strain ATCC BAA-477 / NRRL B-23932 / Pf-5)</name>
    <dbReference type="NCBI Taxonomy" id="220664"/>
    <lineage>
        <taxon>Bacteria</taxon>
        <taxon>Pseudomonadati</taxon>
        <taxon>Pseudomonadota</taxon>
        <taxon>Gammaproteobacteria</taxon>
        <taxon>Pseudomonadales</taxon>
        <taxon>Pseudomonadaceae</taxon>
        <taxon>Pseudomonas</taxon>
    </lineage>
</organism>
<evidence type="ECO:0000255" key="1">
    <source>
        <dbReference type="HAMAP-Rule" id="MF_00073"/>
    </source>
</evidence>
<evidence type="ECO:0000256" key="2">
    <source>
        <dbReference type="SAM" id="MobiDB-lite"/>
    </source>
</evidence>
<comment type="function">
    <text evidence="1">Involved in transcription antitermination. Required for transcription of ribosomal RNA (rRNA) genes. Binds specifically to the boxA antiterminator sequence of the ribosomal RNA (rrn) operons.</text>
</comment>
<comment type="similarity">
    <text evidence="1">Belongs to the NusB family.</text>
</comment>
<gene>
    <name evidence="1" type="primary">nusB</name>
    <name type="ordered locus">PFL_5518</name>
</gene>